<gene>
    <name type="primary">KBTB1</name>
    <name type="ordered locus">CPXV193</name>
</gene>
<accession>Q8QMQ2</accession>
<evidence type="ECO:0000250" key="1"/>
<evidence type="ECO:0000255" key="2">
    <source>
        <dbReference type="PROSITE-ProRule" id="PRU00037"/>
    </source>
</evidence>
<proteinExistence type="inferred from homology"/>
<name>KBTB1_CWPXB</name>
<feature type="chain" id="PRO_0000396135" description="Kelch repeat and BTB domain-containing protein 1">
    <location>
        <begin position="1"/>
        <end position="563"/>
    </location>
</feature>
<feature type="domain" description="BTB" evidence="2">
    <location>
        <begin position="21"/>
        <end position="88"/>
    </location>
</feature>
<feature type="domain" description="BACK">
    <location>
        <begin position="123"/>
        <end position="219"/>
    </location>
</feature>
<feature type="repeat" description="Kelch 1">
    <location>
        <begin position="252"/>
        <end position="297"/>
    </location>
</feature>
<feature type="repeat" description="Kelch 2">
    <location>
        <begin position="298"/>
        <end position="346"/>
    </location>
</feature>
<feature type="repeat" description="Kelch 3">
    <location>
        <begin position="347"/>
        <end position="395"/>
    </location>
</feature>
<feature type="repeat" description="Kelch 4">
    <location>
        <begin position="397"/>
        <end position="441"/>
    </location>
</feature>
<feature type="repeat" description="Kelch 5">
    <location>
        <begin position="442"/>
        <end position="492"/>
    </location>
</feature>
<feature type="repeat" description="Kelch 6">
    <location>
        <begin position="494"/>
        <end position="538"/>
    </location>
</feature>
<protein>
    <recommendedName>
        <fullName>Kelch repeat and BTB domain-containing protein 1</fullName>
    </recommendedName>
</protein>
<reference key="1">
    <citation type="submission" date="2003-05" db="EMBL/GenBank/DDBJ databases">
        <authorList>
            <person name="Dietrich F.S."/>
            <person name="Ray C.A."/>
            <person name="Sharma D.A."/>
            <person name="Allen A."/>
            <person name="Pickup D.J."/>
        </authorList>
    </citation>
    <scope>NUCLEOTIDE SEQUENCE [LARGE SCALE GENOMIC DNA]</scope>
    <source>
        <strain>Brighton Red</strain>
    </source>
</reference>
<dbReference type="EMBL" id="AF482758">
    <property type="protein sequence ID" value="AAM13632.1"/>
    <property type="molecule type" value="Genomic_DNA"/>
</dbReference>
<dbReference type="SMR" id="Q8QMQ2"/>
<dbReference type="KEGG" id="vg:1486072"/>
<dbReference type="Proteomes" id="UP000152733">
    <property type="component" value="Segment"/>
</dbReference>
<dbReference type="GO" id="GO:0030430">
    <property type="term" value="C:host cell cytoplasm"/>
    <property type="evidence" value="ECO:0007669"/>
    <property type="project" value="UniProtKB-SubCell"/>
</dbReference>
<dbReference type="GO" id="GO:0039648">
    <property type="term" value="P:symbiont-mediated perturbation of host ubiquitin-like protein modification"/>
    <property type="evidence" value="ECO:0007669"/>
    <property type="project" value="UniProtKB-KW"/>
</dbReference>
<dbReference type="Gene3D" id="1.25.40.420">
    <property type="match status" value="1"/>
</dbReference>
<dbReference type="Gene3D" id="2.120.10.80">
    <property type="entry name" value="Kelch-type beta propeller"/>
    <property type="match status" value="1"/>
</dbReference>
<dbReference type="Gene3D" id="3.30.710.10">
    <property type="entry name" value="Potassium Channel Kv1.1, Chain A"/>
    <property type="match status" value="1"/>
</dbReference>
<dbReference type="InterPro" id="IPR011705">
    <property type="entry name" value="BACK"/>
</dbReference>
<dbReference type="InterPro" id="IPR000210">
    <property type="entry name" value="BTB/POZ_dom"/>
</dbReference>
<dbReference type="InterPro" id="IPR015915">
    <property type="entry name" value="Kelch-typ_b-propeller"/>
</dbReference>
<dbReference type="InterPro" id="IPR006652">
    <property type="entry name" value="Kelch_1"/>
</dbReference>
<dbReference type="InterPro" id="IPR011333">
    <property type="entry name" value="SKP1/BTB/POZ_sf"/>
</dbReference>
<dbReference type="InterPro" id="IPR024182">
    <property type="entry name" value="Vaccinia_A55R"/>
</dbReference>
<dbReference type="PANTHER" id="PTHR45632:SF3">
    <property type="entry name" value="KELCH-LIKE PROTEIN 32"/>
    <property type="match status" value="1"/>
</dbReference>
<dbReference type="PANTHER" id="PTHR45632">
    <property type="entry name" value="LD33804P"/>
    <property type="match status" value="1"/>
</dbReference>
<dbReference type="Pfam" id="PF07707">
    <property type="entry name" value="BACK"/>
    <property type="match status" value="1"/>
</dbReference>
<dbReference type="Pfam" id="PF00651">
    <property type="entry name" value="BTB"/>
    <property type="match status" value="1"/>
</dbReference>
<dbReference type="Pfam" id="PF01344">
    <property type="entry name" value="Kelch_1"/>
    <property type="match status" value="3"/>
</dbReference>
<dbReference type="PIRSF" id="PIRSF003716">
    <property type="entry name" value="VAC_F3L"/>
    <property type="match status" value="1"/>
</dbReference>
<dbReference type="SMART" id="SM00875">
    <property type="entry name" value="BACK"/>
    <property type="match status" value="1"/>
</dbReference>
<dbReference type="SMART" id="SM00225">
    <property type="entry name" value="BTB"/>
    <property type="match status" value="1"/>
</dbReference>
<dbReference type="SMART" id="SM00612">
    <property type="entry name" value="Kelch"/>
    <property type="match status" value="5"/>
</dbReference>
<dbReference type="SUPFAM" id="SSF117281">
    <property type="entry name" value="Kelch motif"/>
    <property type="match status" value="1"/>
</dbReference>
<dbReference type="SUPFAM" id="SSF54695">
    <property type="entry name" value="POZ domain"/>
    <property type="match status" value="1"/>
</dbReference>
<dbReference type="PROSITE" id="PS50097">
    <property type="entry name" value="BTB"/>
    <property type="match status" value="1"/>
</dbReference>
<organism>
    <name type="scientific">Cowpox virus (strain Brighton Red)</name>
    <name type="common">CPV</name>
    <dbReference type="NCBI Taxonomy" id="265872"/>
    <lineage>
        <taxon>Viruses</taxon>
        <taxon>Varidnaviria</taxon>
        <taxon>Bamfordvirae</taxon>
        <taxon>Nucleocytoviricota</taxon>
        <taxon>Pokkesviricetes</taxon>
        <taxon>Chitovirales</taxon>
        <taxon>Poxviridae</taxon>
        <taxon>Chordopoxvirinae</taxon>
        <taxon>Orthopoxvirus</taxon>
        <taxon>Cowpox virus</taxon>
    </lineage>
</organism>
<keyword id="KW-1035">Host cytoplasm</keyword>
<keyword id="KW-0945">Host-virus interaction</keyword>
<keyword id="KW-0880">Kelch repeat</keyword>
<keyword id="KW-1123">Modulation of host E3 ubiquitin ligases by virus</keyword>
<keyword id="KW-1130">Modulation of host ubiquitin pathway by virus</keyword>
<keyword id="KW-0677">Repeat</keyword>
<keyword id="KW-0833">Ubl conjugation pathway</keyword>
<sequence length="563" mass="64594">MHNSSELIAVINGFRNSGRFCDINIVINDERINAHRLMLSGASEYFSILFSSDFIDSNDYEVNLSHLDYQSVNDLIDYIYGIPLSLTNDNVKYILSTADFLQIGSAITECEKYILKNLCSRNCIDFYIYADKYNNKKIESASFNTILRNILRLINDENFKYLTEESMIKILSDDMLNIKNEDFAPLILIKWLESTQQPCTVELLRCLRISLLSPQVIKSLYSHRLVSSIYECITFLNNIAFLDESFPRYHSIELISIGISNSHDKISINCYNRKKNTWEMISSRRYRCSFAVAVLDNIIYMMGGYDQSPYRSSKVIAYNTCTNSWIYDIPELKYPRSNCGGVADDEYIYCIGGIRDQDSSLISSIDRWKPSKPYWQTYAKMREPKCDMGVAMLNGLIYVIGGIVKGDTCTDALESLSEDGWMKHQRLPIKMSNMSTIVHAGKIYISGGYNNSSAVNGPSNLVLSYNPIYDEWTKLSSLNIPRINPALWSAHNKLYVGGGISNDQTTTSETYDKEKDCWTLDNGHVLPRNYIMYKCEPIKHKYPLEKIQYTNDFLKCLESFIDS</sequence>
<organismHost>
    <name type="scientific">Bos taurus</name>
    <name type="common">Bovine</name>
    <dbReference type="NCBI Taxonomy" id="9913"/>
</organismHost>
<organismHost>
    <name type="scientific">Felis catus</name>
    <name type="common">Cat</name>
    <name type="synonym">Felis silvestris catus</name>
    <dbReference type="NCBI Taxonomy" id="9685"/>
</organismHost>
<organismHost>
    <name type="scientific">Homo sapiens</name>
    <name type="common">Human</name>
    <dbReference type="NCBI Taxonomy" id="9606"/>
</organismHost>
<organismHost>
    <name type="scientific">Loxodonta africana</name>
    <name type="common">African elephant</name>
    <dbReference type="NCBI Taxonomy" id="9785"/>
</organismHost>
<organismHost>
    <name type="scientific">Microtus agrestis</name>
    <name type="common">Short-tailed field vole</name>
    <dbReference type="NCBI Taxonomy" id="29092"/>
</organismHost>
<organismHost>
    <name type="scientific">Mus musculus</name>
    <name type="common">Mouse</name>
    <dbReference type="NCBI Taxonomy" id="10090"/>
</organismHost>
<organismHost>
    <name type="scientific">Myodes glareolus</name>
    <name type="common">Bank vole</name>
    <name type="synonym">Clethrionomys glareolus</name>
    <dbReference type="NCBI Taxonomy" id="447135"/>
</organismHost>
<comment type="function">
    <text>Probable substrate-specific adapter of CUL3-containing E3 ubiquitin-protein ligases which mediate the ubiquitination and subsequent proteasomal degradation of host target proteins.</text>
</comment>
<comment type="subunit">
    <text evidence="1">Interacts (via BTB domain) with host CUL3.</text>
</comment>
<comment type="subcellular location">
    <subcellularLocation>
        <location evidence="1">Host cytoplasm</location>
    </subcellularLocation>
</comment>
<comment type="domain">
    <text evidence="1">The BTB domain is responsible for the interaction with CUL3 while the Kelch repeat domains supposely serve to recruit the cellular substrates.</text>
</comment>